<dbReference type="EC" id="5.6.1.1" evidence="3"/>
<dbReference type="EMBL" id="CH480815">
    <property type="protein sequence ID" value="EDW43419.1"/>
    <property type="molecule type" value="Genomic_DNA"/>
</dbReference>
<dbReference type="SMR" id="B4HGG6"/>
<dbReference type="STRING" id="7238.B4HGG6"/>
<dbReference type="EnsemblMetazoa" id="FBtr0209536">
    <property type="protein sequence ID" value="FBpp0208028"/>
    <property type="gene ID" value="FBgn0181404"/>
</dbReference>
<dbReference type="EnsemblMetazoa" id="XM_002032397.2">
    <property type="protein sequence ID" value="XP_002032433.1"/>
    <property type="gene ID" value="LOC6607668"/>
</dbReference>
<dbReference type="GeneID" id="6607668"/>
<dbReference type="KEGG" id="dse:6607668"/>
<dbReference type="HOGENOM" id="CLU_000688_21_5_1"/>
<dbReference type="OMA" id="KSREPML"/>
<dbReference type="OrthoDB" id="45566at7215"/>
<dbReference type="PhylomeDB" id="B4HGG6"/>
<dbReference type="Proteomes" id="UP000001292">
    <property type="component" value="Unassembled WGS sequence"/>
</dbReference>
<dbReference type="GO" id="GO:0005813">
    <property type="term" value="C:centrosome"/>
    <property type="evidence" value="ECO:0000250"/>
    <property type="project" value="UniProtKB"/>
</dbReference>
<dbReference type="GO" id="GO:0005694">
    <property type="term" value="C:chromosome"/>
    <property type="evidence" value="ECO:0007669"/>
    <property type="project" value="UniProtKB-SubCell"/>
</dbReference>
<dbReference type="GO" id="GO:0005811">
    <property type="term" value="C:lipid droplet"/>
    <property type="evidence" value="ECO:0007669"/>
    <property type="project" value="UniProtKB-SubCell"/>
</dbReference>
<dbReference type="GO" id="GO:0016020">
    <property type="term" value="C:membrane"/>
    <property type="evidence" value="ECO:0007669"/>
    <property type="project" value="UniProtKB-SubCell"/>
</dbReference>
<dbReference type="GO" id="GO:0005874">
    <property type="term" value="C:microtubule"/>
    <property type="evidence" value="ECO:0007669"/>
    <property type="project" value="UniProtKB-UniRule"/>
</dbReference>
<dbReference type="GO" id="GO:0031594">
    <property type="term" value="C:neuromuscular junction"/>
    <property type="evidence" value="ECO:0007669"/>
    <property type="project" value="EnsemblMetazoa"/>
</dbReference>
<dbReference type="GO" id="GO:0005819">
    <property type="term" value="C:spindle"/>
    <property type="evidence" value="ECO:0007669"/>
    <property type="project" value="UniProtKB-UniRule"/>
</dbReference>
<dbReference type="GO" id="GO:0008021">
    <property type="term" value="C:synaptic vesicle"/>
    <property type="evidence" value="ECO:0007669"/>
    <property type="project" value="EnsemblMetazoa"/>
</dbReference>
<dbReference type="GO" id="GO:0043195">
    <property type="term" value="C:terminal bouton"/>
    <property type="evidence" value="ECO:0007669"/>
    <property type="project" value="EnsemblMetazoa"/>
</dbReference>
<dbReference type="GO" id="GO:0005524">
    <property type="term" value="F:ATP binding"/>
    <property type="evidence" value="ECO:0007669"/>
    <property type="project" value="UniProtKB-UniRule"/>
</dbReference>
<dbReference type="GO" id="GO:0016887">
    <property type="term" value="F:ATP hydrolysis activity"/>
    <property type="evidence" value="ECO:0007669"/>
    <property type="project" value="InterPro"/>
</dbReference>
<dbReference type="GO" id="GO:0008017">
    <property type="term" value="F:microtubule binding"/>
    <property type="evidence" value="ECO:0000250"/>
    <property type="project" value="UniProtKB"/>
</dbReference>
<dbReference type="GO" id="GO:0008568">
    <property type="term" value="F:microtubule severing ATPase activity"/>
    <property type="evidence" value="ECO:0000250"/>
    <property type="project" value="UniProtKB"/>
</dbReference>
<dbReference type="GO" id="GO:0008344">
    <property type="term" value="P:adult locomotory behavior"/>
    <property type="evidence" value="ECO:0007669"/>
    <property type="project" value="UniProtKB-UniRule"/>
</dbReference>
<dbReference type="GO" id="GO:0051301">
    <property type="term" value="P:cell division"/>
    <property type="evidence" value="ECO:0007669"/>
    <property type="project" value="UniProtKB-KW"/>
</dbReference>
<dbReference type="GO" id="GO:0035099">
    <property type="term" value="P:hemocyte migration"/>
    <property type="evidence" value="ECO:0007669"/>
    <property type="project" value="EnsemblMetazoa"/>
</dbReference>
<dbReference type="GO" id="GO:0051013">
    <property type="term" value="P:microtubule severing"/>
    <property type="evidence" value="ECO:0000250"/>
    <property type="project" value="UniProtKB"/>
</dbReference>
<dbReference type="GO" id="GO:0007079">
    <property type="term" value="P:mitotic chromosome movement towards spindle pole"/>
    <property type="evidence" value="ECO:0007669"/>
    <property type="project" value="UniProtKB-UniRule"/>
</dbReference>
<dbReference type="GO" id="GO:0000022">
    <property type="term" value="P:mitotic spindle elongation"/>
    <property type="evidence" value="ECO:0007669"/>
    <property type="project" value="UniProtKB-UniRule"/>
</dbReference>
<dbReference type="GO" id="GO:0007026">
    <property type="term" value="P:negative regulation of microtubule depolymerization"/>
    <property type="evidence" value="ECO:0007669"/>
    <property type="project" value="EnsemblMetazoa"/>
</dbReference>
<dbReference type="GO" id="GO:1900074">
    <property type="term" value="P:negative regulation of neuromuscular synaptic transmission"/>
    <property type="evidence" value="ECO:0007669"/>
    <property type="project" value="EnsemblMetazoa"/>
</dbReference>
<dbReference type="GO" id="GO:0045886">
    <property type="term" value="P:negative regulation of synaptic assembly at neuromuscular junction"/>
    <property type="evidence" value="ECO:0007669"/>
    <property type="project" value="EnsemblMetazoa"/>
</dbReference>
<dbReference type="GO" id="GO:0007399">
    <property type="term" value="P:nervous system development"/>
    <property type="evidence" value="ECO:0007669"/>
    <property type="project" value="UniProtKB-KW"/>
</dbReference>
<dbReference type="GO" id="GO:0048691">
    <property type="term" value="P:positive regulation of axon extension involved in regeneration"/>
    <property type="evidence" value="ECO:0007669"/>
    <property type="project" value="EnsemblMetazoa"/>
</dbReference>
<dbReference type="GO" id="GO:0050775">
    <property type="term" value="P:positive regulation of dendrite morphogenesis"/>
    <property type="evidence" value="ECO:0007669"/>
    <property type="project" value="EnsemblMetazoa"/>
</dbReference>
<dbReference type="GO" id="GO:0045834">
    <property type="term" value="P:positive regulation of lipid metabolic process"/>
    <property type="evidence" value="ECO:0007669"/>
    <property type="project" value="EnsemblMetazoa"/>
</dbReference>
<dbReference type="GO" id="GO:0031117">
    <property type="term" value="P:positive regulation of microtubule depolymerization"/>
    <property type="evidence" value="ECO:0007669"/>
    <property type="project" value="UniProtKB-UniRule"/>
</dbReference>
<dbReference type="GO" id="GO:1900075">
    <property type="term" value="P:positive regulation of neuromuscular synaptic transmission"/>
    <property type="evidence" value="ECO:0007669"/>
    <property type="project" value="EnsemblMetazoa"/>
</dbReference>
<dbReference type="GO" id="GO:0045887">
    <property type="term" value="P:positive regulation of synaptic assembly at neuromuscular junction"/>
    <property type="evidence" value="ECO:0007669"/>
    <property type="project" value="EnsemblMetazoa"/>
</dbReference>
<dbReference type="GO" id="GO:0034214">
    <property type="term" value="P:protein hexamerization"/>
    <property type="evidence" value="ECO:0007669"/>
    <property type="project" value="UniProtKB-UniRule"/>
</dbReference>
<dbReference type="GO" id="GO:2000331">
    <property type="term" value="P:regulation of terminal button organization"/>
    <property type="evidence" value="ECO:0007669"/>
    <property type="project" value="EnsemblMetazoa"/>
</dbReference>
<dbReference type="CDD" id="cd02679">
    <property type="entry name" value="MIT_spastin"/>
    <property type="match status" value="1"/>
</dbReference>
<dbReference type="CDD" id="cd19524">
    <property type="entry name" value="RecA-like_spastin"/>
    <property type="match status" value="1"/>
</dbReference>
<dbReference type="FunFam" id="3.40.50.300:FF:000093">
    <property type="entry name" value="Fidgetin-like 1"/>
    <property type="match status" value="1"/>
</dbReference>
<dbReference type="FunFam" id="1.10.8.60:FF:000036">
    <property type="entry name" value="Spastin"/>
    <property type="match status" value="1"/>
</dbReference>
<dbReference type="FunFam" id="1.20.58.80:FF:000006">
    <property type="entry name" value="Spastin"/>
    <property type="match status" value="1"/>
</dbReference>
<dbReference type="Gene3D" id="1.10.8.60">
    <property type="match status" value="1"/>
</dbReference>
<dbReference type="Gene3D" id="3.40.50.300">
    <property type="entry name" value="P-loop containing nucleotide triphosphate hydrolases"/>
    <property type="match status" value="1"/>
</dbReference>
<dbReference type="Gene3D" id="1.20.58.80">
    <property type="entry name" value="Phosphotransferase system, lactose/cellobiose-type IIA subunit"/>
    <property type="match status" value="1"/>
</dbReference>
<dbReference type="HAMAP" id="MF_03021">
    <property type="entry name" value="Spastin"/>
    <property type="match status" value="1"/>
</dbReference>
<dbReference type="InterPro" id="IPR003593">
    <property type="entry name" value="AAA+_ATPase"/>
</dbReference>
<dbReference type="InterPro" id="IPR041569">
    <property type="entry name" value="AAA_lid_3"/>
</dbReference>
<dbReference type="InterPro" id="IPR003959">
    <property type="entry name" value="ATPase_AAA_core"/>
</dbReference>
<dbReference type="InterPro" id="IPR003960">
    <property type="entry name" value="ATPase_AAA_CS"/>
</dbReference>
<dbReference type="InterPro" id="IPR007330">
    <property type="entry name" value="MIT_dom"/>
</dbReference>
<dbReference type="InterPro" id="IPR050304">
    <property type="entry name" value="MT-severing_AAA_ATPase"/>
</dbReference>
<dbReference type="InterPro" id="IPR027417">
    <property type="entry name" value="P-loop_NTPase"/>
</dbReference>
<dbReference type="InterPro" id="IPR015415">
    <property type="entry name" value="Spast_Vps4_C"/>
</dbReference>
<dbReference type="InterPro" id="IPR017179">
    <property type="entry name" value="Spastin"/>
</dbReference>
<dbReference type="PANTHER" id="PTHR23074">
    <property type="entry name" value="AAA DOMAIN-CONTAINING"/>
    <property type="match status" value="1"/>
</dbReference>
<dbReference type="PANTHER" id="PTHR23074:SF86">
    <property type="entry name" value="SPASTIN"/>
    <property type="match status" value="1"/>
</dbReference>
<dbReference type="Pfam" id="PF00004">
    <property type="entry name" value="AAA"/>
    <property type="match status" value="1"/>
</dbReference>
<dbReference type="Pfam" id="PF17862">
    <property type="entry name" value="AAA_lid_3"/>
    <property type="match status" value="1"/>
</dbReference>
<dbReference type="Pfam" id="PF09336">
    <property type="entry name" value="Vps4_C"/>
    <property type="match status" value="1"/>
</dbReference>
<dbReference type="SMART" id="SM00382">
    <property type="entry name" value="AAA"/>
    <property type="match status" value="1"/>
</dbReference>
<dbReference type="SMART" id="SM00745">
    <property type="entry name" value="MIT"/>
    <property type="match status" value="1"/>
</dbReference>
<dbReference type="SUPFAM" id="SSF52540">
    <property type="entry name" value="P-loop containing nucleoside triphosphate hydrolases"/>
    <property type="match status" value="1"/>
</dbReference>
<dbReference type="PROSITE" id="PS00674">
    <property type="entry name" value="AAA"/>
    <property type="match status" value="1"/>
</dbReference>
<keyword id="KW-0067">ATP-binding</keyword>
<keyword id="KW-0131">Cell cycle</keyword>
<keyword id="KW-0132">Cell division</keyword>
<keyword id="KW-0158">Chromosome</keyword>
<keyword id="KW-0963">Cytoplasm</keyword>
<keyword id="KW-0206">Cytoskeleton</keyword>
<keyword id="KW-0217">Developmental protein</keyword>
<keyword id="KW-0221">Differentiation</keyword>
<keyword id="KW-0413">Isomerase</keyword>
<keyword id="KW-0551">Lipid droplet</keyword>
<keyword id="KW-0472">Membrane</keyword>
<keyword id="KW-0493">Microtubule</keyword>
<keyword id="KW-0498">Mitosis</keyword>
<keyword id="KW-0524">Neurogenesis</keyword>
<keyword id="KW-0547">Nucleotide-binding</keyword>
<keyword id="KW-1185">Reference proteome</keyword>
<evidence type="ECO:0000250" key="1">
    <source>
        <dbReference type="UniProtKB" id="Q8I0P1"/>
    </source>
</evidence>
<evidence type="ECO:0000255" key="2"/>
<evidence type="ECO:0000255" key="3">
    <source>
        <dbReference type="HAMAP-Rule" id="MF_03021"/>
    </source>
</evidence>
<evidence type="ECO:0000256" key="4">
    <source>
        <dbReference type="SAM" id="MobiDB-lite"/>
    </source>
</evidence>
<name>SPAST_DROSE</name>
<protein>
    <recommendedName>
        <fullName evidence="3">Spastin</fullName>
        <ecNumber evidence="3">5.6.1.1</ecNumber>
    </recommendedName>
</protein>
<accession>B4HGG6</accession>
<gene>
    <name evidence="3" type="primary">spas</name>
    <name type="ORF">GM26551</name>
</gene>
<proteinExistence type="inferred from homology"/>
<sequence length="758" mass="82763">MVRTKNQSSSSSASSSSTKSPIKSSSGAGSSGGGVGGRQSTHRSSSASNVAAVVAGGSSAAGGGSSSNRRSPGSSPDGDDDTTTTDDLTPTTCSPRSGHHHSYGGYSSSVHKQNLYVVSFPIIFLFNVLRSLIYQLFCIFRYLYGASTKVIYRPHRRDCNIEIVVQNSSKEQQQSLNHPSELNREGDGQEQQLSNQPQRFRPIQPLEMAANRPGGGYSPGPGDPLLAKQKHHHRRAFEYISKALKIDEENEGHKELAIELYRKGIKELEDGIAVDCWSGRGDVWDRAQRLHDKMQTNLSMARDRLHFLALREQDLQMQRLSLKEKQKEEARSKPQKTREPMLAGMTNEPMKLRVRSSGYGPKATTSAQPTASGRKLTIGSKRPVNLAVANKSQTLPRNLGSKTSVGAVQRQPAKTAATPPAVRRQFSSGRNTPPQRSRTPINNNGPSGSGASTPVVSVKGVEQKLVQLILDEIVEGGAKVEWTDIAGQDVAKQALQEMVILPSVRPELFTGLRAPAKGLLLFGPPGNGKTLLARAVATECSATFLNISAASLTSKYVGDGEKLVRALFAVARHMQPSIIFIDEVDSLLSERSSSEHEASRRLKTEFLVEFDGLPGNPDGDRIVVLAATNRPQELDEAALRRFTKRVYVSLPDEQTRELLLNRLLQKQGSPLDTEALRRLAKITDGYSGSDLTALAKDAALEPIRELNVEQVKCLDISAMRAITEQDFHSSLKRIRRSVAPQSLNSYEKWSQDYGDITI</sequence>
<organism>
    <name type="scientific">Drosophila sechellia</name>
    <name type="common">Fruit fly</name>
    <dbReference type="NCBI Taxonomy" id="7238"/>
    <lineage>
        <taxon>Eukaryota</taxon>
        <taxon>Metazoa</taxon>
        <taxon>Ecdysozoa</taxon>
        <taxon>Arthropoda</taxon>
        <taxon>Hexapoda</taxon>
        <taxon>Insecta</taxon>
        <taxon>Pterygota</taxon>
        <taxon>Neoptera</taxon>
        <taxon>Endopterygota</taxon>
        <taxon>Diptera</taxon>
        <taxon>Brachycera</taxon>
        <taxon>Muscomorpha</taxon>
        <taxon>Ephydroidea</taxon>
        <taxon>Drosophilidae</taxon>
        <taxon>Drosophila</taxon>
        <taxon>Sophophora</taxon>
    </lineage>
</organism>
<reference key="1">
    <citation type="journal article" date="2007" name="Nature">
        <title>Evolution of genes and genomes on the Drosophila phylogeny.</title>
        <authorList>
            <consortium name="Drosophila 12 genomes consortium"/>
        </authorList>
    </citation>
    <scope>NUCLEOTIDE SEQUENCE [LARGE SCALE GENOMIC DNA]</scope>
    <source>
        <strain>Rob3c / Tucson 14021-0248.25</strain>
    </source>
</reference>
<feature type="chain" id="PRO_0000367148" description="Spastin">
    <location>
        <begin position="1"/>
        <end position="758"/>
    </location>
</feature>
<feature type="topological domain" description="Cytoplasmic" evidence="3">
    <location>
        <begin position="1"/>
        <end position="121"/>
    </location>
</feature>
<feature type="intramembrane region" description="Helical" evidence="3">
    <location>
        <begin position="122"/>
        <end position="142"/>
    </location>
</feature>
<feature type="topological domain" description="Cytoplasmic" evidence="3">
    <location>
        <begin position="143"/>
        <end position="758"/>
    </location>
</feature>
<feature type="domain" description="MIT" evidence="2">
    <location>
        <begin position="233"/>
        <end position="308"/>
    </location>
</feature>
<feature type="region of interest" description="Required for localization to punctate cytoplasmic foci" evidence="1">
    <location>
        <begin position="1"/>
        <end position="210"/>
    </location>
</feature>
<feature type="region of interest" description="Disordered" evidence="4">
    <location>
        <begin position="1"/>
        <end position="103"/>
    </location>
</feature>
<feature type="region of interest" description="Disordered" evidence="4">
    <location>
        <begin position="169"/>
        <end position="202"/>
    </location>
</feature>
<feature type="region of interest" description="Sufficient for interaction with microtubules and microtubule severing" evidence="1">
    <location>
        <begin position="208"/>
        <end position="758"/>
    </location>
</feature>
<feature type="region of interest" description="Disordered" evidence="4">
    <location>
        <begin position="353"/>
        <end position="454"/>
    </location>
</feature>
<feature type="region of interest" description="Required for interaction with microtubules" evidence="1">
    <location>
        <begin position="443"/>
        <end position="455"/>
    </location>
</feature>
<feature type="compositionally biased region" description="Low complexity" evidence="4">
    <location>
        <begin position="8"/>
        <end position="28"/>
    </location>
</feature>
<feature type="compositionally biased region" description="Low complexity" evidence="4">
    <location>
        <begin position="43"/>
        <end position="58"/>
    </location>
</feature>
<feature type="compositionally biased region" description="Low complexity" evidence="4">
    <location>
        <begin position="66"/>
        <end position="76"/>
    </location>
</feature>
<feature type="compositionally biased region" description="Low complexity" evidence="4">
    <location>
        <begin position="85"/>
        <end position="95"/>
    </location>
</feature>
<feature type="compositionally biased region" description="Polar residues" evidence="4">
    <location>
        <begin position="169"/>
        <end position="180"/>
    </location>
</feature>
<feature type="compositionally biased region" description="Polar residues" evidence="4">
    <location>
        <begin position="189"/>
        <end position="198"/>
    </location>
</feature>
<feature type="compositionally biased region" description="Polar residues" evidence="4">
    <location>
        <begin position="390"/>
        <end position="406"/>
    </location>
</feature>
<feature type="compositionally biased region" description="Polar residues" evidence="4">
    <location>
        <begin position="425"/>
        <end position="454"/>
    </location>
</feature>
<feature type="binding site" evidence="3">
    <location>
        <begin position="523"/>
        <end position="530"/>
    </location>
    <ligand>
        <name>ATP</name>
        <dbReference type="ChEBI" id="CHEBI:30616"/>
    </ligand>
</feature>
<comment type="function">
    <text evidence="3">ATP-dependent microtubule severing protein. Stimulates microtubule minus-end depolymerization and poleward microtubule flux in the mitotic spindle. Regulates microtubule stability in the neuromuscular junction synapse. Involved in lipid metabolism by regulating the size and distribution of lipid droplets. Involved in axon regeneration by regulating microtubule severing.</text>
</comment>
<comment type="catalytic activity">
    <reaction evidence="3">
        <text>n ATP + n H2O + a microtubule = n ADP + n phosphate + (n+1) alpha/beta tubulin heterodimers.</text>
        <dbReference type="EC" id="5.6.1.1"/>
    </reaction>
</comment>
<comment type="subunit">
    <text evidence="3">Homohexamer. The homohexamer is stabilized by ATP-binding. The homohexamer may adopt a ring conformation through which microtubules pass prior to being severed. Interacts with microtubules. Interacts with atl; may be involved in microtubule dynamics.</text>
</comment>
<comment type="subcellular location">
    <subcellularLocation>
        <location evidence="3">Membrane</location>
        <topology evidence="3">Peripheral membrane protein</topology>
    </subcellularLocation>
    <subcellularLocation>
        <location evidence="3">Cytoplasm</location>
        <location evidence="3">Cytoskeleton</location>
        <location evidence="3">Microtubule organizing center</location>
        <location evidence="3">Centrosome</location>
    </subcellularLocation>
    <subcellularLocation>
        <location evidence="3">Cytoplasm</location>
        <location evidence="3">Cytoskeleton</location>
    </subcellularLocation>
    <subcellularLocation>
        <location evidence="3">Chromosome</location>
    </subcellularLocation>
    <subcellularLocation>
        <location evidence="3">Lipid droplet</location>
    </subcellularLocation>
    <text evidence="3">Forms an intramembrane hairpin-like structure in the membrane. Colocalizes with cellular microtubule arrays. Localizes to chromosomes from prometaphase/metaphase to anaphase, and this requires microtubules. Localizes to discrete punctate cytoplasmic foci which may correspond to secretory vesicles.</text>
</comment>
<comment type="similarity">
    <text evidence="3">Belongs to the AAA ATPase family. Spastin subfamily.</text>
</comment>